<evidence type="ECO:0000250" key="1"/>
<evidence type="ECO:0000250" key="2">
    <source>
        <dbReference type="UniProtKB" id="O42255"/>
    </source>
</evidence>
<evidence type="ECO:0000250" key="3">
    <source>
        <dbReference type="UniProtKB" id="Q8AY51"/>
    </source>
</evidence>
<evidence type="ECO:0000305" key="4"/>
<proteinExistence type="inferred from homology"/>
<comment type="function">
    <text evidence="2">Binds with low affinity to muscular (alpha-1-beta-1-delta-epsilon/CHRNA1-CHRNB1-CHRND-CHRNE) and very low affinity to neuronal (alpha-7/CHRNA7) nicotinic acetylcholine receptor (nAChR).</text>
</comment>
<comment type="subcellular location">
    <subcellularLocation>
        <location evidence="2">Secreted</location>
    </subcellularLocation>
</comment>
<comment type="tissue specificity">
    <text evidence="4">Expressed by the venom gland.</text>
</comment>
<comment type="similarity">
    <text evidence="4">Belongs to the three-finger toxin family. Ancestral subfamily. Orphan group II sub-subfamily.</text>
</comment>
<sequence length="86" mass="9807">MKTLLLTLVVVTIVCLDLGYTLTCLNCPEMFCGKFQTCRDGEKICFKKLQQRRPFSLRYIRGCAATCPGTKPRDMVECCSTDRCNR</sequence>
<accession>O42256</accession>
<accession>Q802B4</accession>
<name>3NO26_NAJSP</name>
<organism>
    <name type="scientific">Naja sputatrix</name>
    <name type="common">Malayan spitting cobra</name>
    <name type="synonym">Naja naja sputatrix</name>
    <dbReference type="NCBI Taxonomy" id="33626"/>
    <lineage>
        <taxon>Eukaryota</taxon>
        <taxon>Metazoa</taxon>
        <taxon>Chordata</taxon>
        <taxon>Craniata</taxon>
        <taxon>Vertebrata</taxon>
        <taxon>Euteleostomi</taxon>
        <taxon>Lepidosauria</taxon>
        <taxon>Squamata</taxon>
        <taxon>Bifurcata</taxon>
        <taxon>Unidentata</taxon>
        <taxon>Episquamata</taxon>
        <taxon>Toxicofera</taxon>
        <taxon>Serpentes</taxon>
        <taxon>Colubroidea</taxon>
        <taxon>Elapidae</taxon>
        <taxon>Elapinae</taxon>
        <taxon>Naja</taxon>
    </lineage>
</organism>
<protein>
    <recommendedName>
        <fullName>Weak neurotoxin 6</fullName>
        <shortName>Wntx-6</shortName>
    </recommendedName>
</protein>
<keyword id="KW-0008">Acetylcholine receptor inhibiting toxin</keyword>
<keyword id="KW-1015">Disulfide bond</keyword>
<keyword id="KW-0872">Ion channel impairing toxin</keyword>
<keyword id="KW-0528">Neurotoxin</keyword>
<keyword id="KW-0629">Postsynaptic neurotoxin</keyword>
<keyword id="KW-0964">Secreted</keyword>
<keyword id="KW-0732">Signal</keyword>
<keyword id="KW-0800">Toxin</keyword>
<dbReference type="EMBL" id="AF026892">
    <property type="protein sequence ID" value="AAB87416.1"/>
    <property type="molecule type" value="mRNA"/>
</dbReference>
<dbReference type="EMBL" id="AY081759">
    <property type="protein sequence ID" value="AAL87465.1"/>
    <property type="molecule type" value="Genomic_DNA"/>
</dbReference>
<dbReference type="SMR" id="O42256"/>
<dbReference type="GO" id="GO:0005576">
    <property type="term" value="C:extracellular region"/>
    <property type="evidence" value="ECO:0007669"/>
    <property type="project" value="UniProtKB-SubCell"/>
</dbReference>
<dbReference type="GO" id="GO:0030550">
    <property type="term" value="F:acetylcholine receptor inhibitor activity"/>
    <property type="evidence" value="ECO:0007669"/>
    <property type="project" value="UniProtKB-KW"/>
</dbReference>
<dbReference type="GO" id="GO:0099106">
    <property type="term" value="F:ion channel regulator activity"/>
    <property type="evidence" value="ECO:0007669"/>
    <property type="project" value="UniProtKB-KW"/>
</dbReference>
<dbReference type="GO" id="GO:0090729">
    <property type="term" value="F:toxin activity"/>
    <property type="evidence" value="ECO:0007669"/>
    <property type="project" value="UniProtKB-KW"/>
</dbReference>
<dbReference type="CDD" id="cd00206">
    <property type="entry name" value="TFP_snake_toxin"/>
    <property type="match status" value="1"/>
</dbReference>
<dbReference type="FunFam" id="2.10.60.10:FF:000024">
    <property type="entry name" value="Cytotoxin 1"/>
    <property type="match status" value="1"/>
</dbReference>
<dbReference type="Gene3D" id="2.10.60.10">
    <property type="entry name" value="CD59"/>
    <property type="match status" value="1"/>
</dbReference>
<dbReference type="InterPro" id="IPR003571">
    <property type="entry name" value="Snake_3FTx"/>
</dbReference>
<dbReference type="InterPro" id="IPR045860">
    <property type="entry name" value="Snake_toxin-like_sf"/>
</dbReference>
<dbReference type="InterPro" id="IPR018354">
    <property type="entry name" value="Snake_toxin_con_site"/>
</dbReference>
<dbReference type="InterPro" id="IPR054131">
    <property type="entry name" value="Toxin_cobra-type"/>
</dbReference>
<dbReference type="Pfam" id="PF21947">
    <property type="entry name" value="Toxin_cobra-type"/>
    <property type="match status" value="1"/>
</dbReference>
<dbReference type="SUPFAM" id="SSF57302">
    <property type="entry name" value="Snake toxin-like"/>
    <property type="match status" value="1"/>
</dbReference>
<dbReference type="PROSITE" id="PS00272">
    <property type="entry name" value="SNAKE_TOXIN"/>
    <property type="match status" value="1"/>
</dbReference>
<reference key="1">
    <citation type="journal article" date="2002" name="Eur. J. Biochem.">
        <title>A synthetic weak neurotoxin binds with low affinity to Torpedo and chicken alpha7 nicotinic acetylcholine receptors.</title>
        <authorList>
            <person name="Poh S.L."/>
            <person name="Mourier G."/>
            <person name="Thai R."/>
            <person name="Armugam A."/>
            <person name="Molgo J."/>
            <person name="Servent D."/>
            <person name="Jeyaseelan K."/>
            <person name="Menez A."/>
        </authorList>
    </citation>
    <scope>NUCLEOTIDE SEQUENCE [MRNA]</scope>
    <source>
        <tissue>Venom gland</tissue>
    </source>
</reference>
<reference key="2">
    <citation type="journal article" date="2003" name="FEBS Lett.">
        <title>Structurally conserved alpha-neurotoxin genes encode functionally diverse proteins in the venom of Naja sputatrix.</title>
        <authorList>
            <person name="Jeyaseelan K."/>
            <person name="Poh S.L."/>
            <person name="Nair R."/>
            <person name="Armugam A."/>
        </authorList>
    </citation>
    <scope>NUCLEOTIDE SEQUENCE [MRNA]</scope>
    <source>
        <tissue>Venom gland</tissue>
    </source>
</reference>
<feature type="signal peptide" evidence="1">
    <location>
        <begin position="1"/>
        <end position="21"/>
    </location>
</feature>
<feature type="chain" id="PRO_0000035476" description="Weak neurotoxin 6">
    <location>
        <begin position="22"/>
        <end position="86"/>
    </location>
</feature>
<feature type="disulfide bond" evidence="3">
    <location>
        <begin position="24"/>
        <end position="45"/>
    </location>
</feature>
<feature type="disulfide bond" evidence="3">
    <location>
        <begin position="27"/>
        <end position="32"/>
    </location>
</feature>
<feature type="disulfide bond" evidence="3">
    <location>
        <begin position="38"/>
        <end position="63"/>
    </location>
</feature>
<feature type="disulfide bond" evidence="3">
    <location>
        <begin position="67"/>
        <end position="78"/>
    </location>
</feature>
<feature type="disulfide bond" evidence="3">
    <location>
        <begin position="79"/>
        <end position="84"/>
    </location>
</feature>
<feature type="sequence variant">
    <original>V</original>
    <variation>L</variation>
    <location>
        <position position="9"/>
    </location>
</feature>
<feature type="sequence variant">
    <original>K</original>
    <variation>M</variation>
    <location>
        <position position="48"/>
    </location>
</feature>